<protein>
    <recommendedName>
        <fullName evidence="1">UPF0509 protein KPN78578_12530</fullName>
    </recommendedName>
</protein>
<proteinExistence type="inferred from homology"/>
<organism>
    <name type="scientific">Klebsiella pneumoniae subsp. pneumoniae (strain ATCC 700721 / MGH 78578)</name>
    <dbReference type="NCBI Taxonomy" id="272620"/>
    <lineage>
        <taxon>Bacteria</taxon>
        <taxon>Pseudomonadati</taxon>
        <taxon>Pseudomonadota</taxon>
        <taxon>Gammaproteobacteria</taxon>
        <taxon>Enterobacterales</taxon>
        <taxon>Enterobacteriaceae</taxon>
        <taxon>Klebsiella/Raoultella group</taxon>
        <taxon>Klebsiella</taxon>
        <taxon>Klebsiella pneumoniae complex</taxon>
    </lineage>
</organism>
<dbReference type="EMBL" id="CP000647">
    <property type="protein sequence ID" value="ABR76714.1"/>
    <property type="molecule type" value="Genomic_DNA"/>
</dbReference>
<dbReference type="RefSeq" id="WP_002901786.1">
    <property type="nucleotide sequence ID" value="NC_009648.1"/>
</dbReference>
<dbReference type="STRING" id="272620.KPN_01281"/>
<dbReference type="PaxDb" id="272620-KPN_01281"/>
<dbReference type="EnsemblBacteria" id="ABR76714">
    <property type="protein sequence ID" value="ABR76714"/>
    <property type="gene ID" value="KPN_01281"/>
</dbReference>
<dbReference type="KEGG" id="kpn:KPN_01281"/>
<dbReference type="HOGENOM" id="CLU_180697_1_0_6"/>
<dbReference type="Proteomes" id="UP000000265">
    <property type="component" value="Chromosome"/>
</dbReference>
<dbReference type="HAMAP" id="MF_01641">
    <property type="entry name" value="UPF0509"/>
    <property type="match status" value="1"/>
</dbReference>
<dbReference type="InterPro" id="IPR020887">
    <property type="entry name" value="UPF0509"/>
</dbReference>
<dbReference type="NCBIfam" id="NF010179">
    <property type="entry name" value="PRK13658.1"/>
    <property type="match status" value="1"/>
</dbReference>
<dbReference type="Pfam" id="PF23675">
    <property type="entry name" value="YciZ"/>
    <property type="match status" value="1"/>
</dbReference>
<gene>
    <name type="ordered locus">KPN78578_12530</name>
    <name type="ORF">KPN_01281</name>
</gene>
<reference key="1">
    <citation type="submission" date="2006-09" db="EMBL/GenBank/DDBJ databases">
        <authorList>
            <consortium name="The Klebsiella pneumonia Genome Sequencing Project"/>
            <person name="McClelland M."/>
            <person name="Sanderson E.K."/>
            <person name="Spieth J."/>
            <person name="Clifton W.S."/>
            <person name="Latreille P."/>
            <person name="Sabo A."/>
            <person name="Pepin K."/>
            <person name="Bhonagiri V."/>
            <person name="Porwollik S."/>
            <person name="Ali J."/>
            <person name="Wilson R.K."/>
        </authorList>
    </citation>
    <scope>NUCLEOTIDE SEQUENCE [LARGE SCALE GENOMIC DNA]</scope>
    <source>
        <strain>ATCC 700721 / MGH 78578</strain>
    </source>
</reference>
<sequence length="59" mass="6503">MSDVNAHLLAQRIDTVLDILVAGDYHSAIHNLEILKAELLALAADDAEQQNQPKAPWEI</sequence>
<accession>A6T7Z3</accession>
<evidence type="ECO:0000255" key="1">
    <source>
        <dbReference type="HAMAP-Rule" id="MF_01641"/>
    </source>
</evidence>
<comment type="similarity">
    <text evidence="1">Belongs to the UPF0509 family.</text>
</comment>
<name>Y1253_KLEP7</name>
<feature type="chain" id="PRO_1000186852" description="UPF0509 protein KPN78578_12530">
    <location>
        <begin position="1"/>
        <end position="59"/>
    </location>
</feature>